<proteinExistence type="inferred from homology"/>
<keyword id="KW-0414">Isoprene biosynthesis</keyword>
<keyword id="KW-0456">Lyase</keyword>
<keyword id="KW-0479">Metal-binding</keyword>
<sequence>MFRIGQGFDVHEFAEGRPLIIGGITIPHEKGLIGHSDADVLLHTIADACLGAIAAGDIGKHFPDTDPAFKDADSAVLLQKVWEFVREQGYELGNLDCTIIAQKPKMAPHIESMRKRISELLETSIDNINVKATTTEKLGFTGREEGIASQAVVLLQKK</sequence>
<comment type="function">
    <text evidence="1">Involved in the biosynthesis of isopentenyl diphosphate (IPP) and dimethylallyl diphosphate (DMAPP), two major building blocks of isoprenoid compounds. Catalyzes the conversion of 4-diphosphocytidyl-2-C-methyl-D-erythritol 2-phosphate (CDP-ME2P) to 2-C-methyl-D-erythritol 2,4-cyclodiphosphate (ME-CPP) with a corresponding release of cytidine 5-monophosphate (CMP).</text>
</comment>
<comment type="catalytic activity">
    <reaction evidence="1">
        <text>4-CDP-2-C-methyl-D-erythritol 2-phosphate = 2-C-methyl-D-erythritol 2,4-cyclic diphosphate + CMP</text>
        <dbReference type="Rhea" id="RHEA:23864"/>
        <dbReference type="ChEBI" id="CHEBI:57919"/>
        <dbReference type="ChEBI" id="CHEBI:58483"/>
        <dbReference type="ChEBI" id="CHEBI:60377"/>
        <dbReference type="EC" id="4.6.1.12"/>
    </reaction>
</comment>
<comment type="cofactor">
    <cofactor evidence="1">
        <name>a divalent metal cation</name>
        <dbReference type="ChEBI" id="CHEBI:60240"/>
    </cofactor>
    <text evidence="1">Binds 1 divalent metal cation per subunit.</text>
</comment>
<comment type="pathway">
    <text evidence="1">Isoprenoid biosynthesis; isopentenyl diphosphate biosynthesis via DXP pathway; isopentenyl diphosphate from 1-deoxy-D-xylulose 5-phosphate: step 4/6.</text>
</comment>
<comment type="subunit">
    <text evidence="1">Homotrimer.</text>
</comment>
<comment type="similarity">
    <text evidence="1">Belongs to the IspF family.</text>
</comment>
<dbReference type="EC" id="4.6.1.12" evidence="1"/>
<dbReference type="EMBL" id="CP000001">
    <property type="protein sequence ID" value="AAU20148.1"/>
    <property type="molecule type" value="Genomic_DNA"/>
</dbReference>
<dbReference type="RefSeq" id="WP_000488386.1">
    <property type="nucleotide sequence ID" value="NZ_CP009968.1"/>
</dbReference>
<dbReference type="SMR" id="Q63HB3"/>
<dbReference type="GeneID" id="93010967"/>
<dbReference type="KEGG" id="bcz:BCE33L0082"/>
<dbReference type="PATRIC" id="fig|288681.22.peg.70"/>
<dbReference type="UniPathway" id="UPA00056">
    <property type="reaction ID" value="UER00095"/>
</dbReference>
<dbReference type="Proteomes" id="UP000002612">
    <property type="component" value="Chromosome"/>
</dbReference>
<dbReference type="GO" id="GO:0008685">
    <property type="term" value="F:2-C-methyl-D-erythritol 2,4-cyclodiphosphate synthase activity"/>
    <property type="evidence" value="ECO:0007669"/>
    <property type="project" value="UniProtKB-UniRule"/>
</dbReference>
<dbReference type="GO" id="GO:0046872">
    <property type="term" value="F:metal ion binding"/>
    <property type="evidence" value="ECO:0007669"/>
    <property type="project" value="UniProtKB-KW"/>
</dbReference>
<dbReference type="GO" id="GO:0019288">
    <property type="term" value="P:isopentenyl diphosphate biosynthetic process, methylerythritol 4-phosphate pathway"/>
    <property type="evidence" value="ECO:0007669"/>
    <property type="project" value="UniProtKB-UniRule"/>
</dbReference>
<dbReference type="GO" id="GO:0016114">
    <property type="term" value="P:terpenoid biosynthetic process"/>
    <property type="evidence" value="ECO:0007669"/>
    <property type="project" value="InterPro"/>
</dbReference>
<dbReference type="CDD" id="cd00554">
    <property type="entry name" value="MECDP_synthase"/>
    <property type="match status" value="1"/>
</dbReference>
<dbReference type="FunFam" id="3.30.1330.50:FF:000001">
    <property type="entry name" value="2-C-methyl-D-erythritol 2,4-cyclodiphosphate synthase"/>
    <property type="match status" value="1"/>
</dbReference>
<dbReference type="Gene3D" id="3.30.1330.50">
    <property type="entry name" value="2-C-methyl-D-erythritol 2,4-cyclodiphosphate synthase"/>
    <property type="match status" value="1"/>
</dbReference>
<dbReference type="HAMAP" id="MF_00107">
    <property type="entry name" value="IspF"/>
    <property type="match status" value="1"/>
</dbReference>
<dbReference type="InterPro" id="IPR003526">
    <property type="entry name" value="MECDP_synthase"/>
</dbReference>
<dbReference type="InterPro" id="IPR020555">
    <property type="entry name" value="MECDP_synthase_CS"/>
</dbReference>
<dbReference type="InterPro" id="IPR036571">
    <property type="entry name" value="MECDP_synthase_sf"/>
</dbReference>
<dbReference type="NCBIfam" id="TIGR00151">
    <property type="entry name" value="ispF"/>
    <property type="match status" value="1"/>
</dbReference>
<dbReference type="PANTHER" id="PTHR43181">
    <property type="entry name" value="2-C-METHYL-D-ERYTHRITOL 2,4-CYCLODIPHOSPHATE SYNTHASE, CHLOROPLASTIC"/>
    <property type="match status" value="1"/>
</dbReference>
<dbReference type="PANTHER" id="PTHR43181:SF1">
    <property type="entry name" value="2-C-METHYL-D-ERYTHRITOL 2,4-CYCLODIPHOSPHATE SYNTHASE, CHLOROPLASTIC"/>
    <property type="match status" value="1"/>
</dbReference>
<dbReference type="Pfam" id="PF02542">
    <property type="entry name" value="YgbB"/>
    <property type="match status" value="1"/>
</dbReference>
<dbReference type="SUPFAM" id="SSF69765">
    <property type="entry name" value="IpsF-like"/>
    <property type="match status" value="1"/>
</dbReference>
<dbReference type="PROSITE" id="PS01350">
    <property type="entry name" value="ISPF"/>
    <property type="match status" value="1"/>
</dbReference>
<feature type="chain" id="PRO_0000189436" description="2-C-methyl-D-erythritol 2,4-cyclodiphosphate synthase">
    <location>
        <begin position="1"/>
        <end position="158"/>
    </location>
</feature>
<feature type="binding site" evidence="1">
    <location>
        <begin position="9"/>
        <end position="11"/>
    </location>
    <ligand>
        <name>4-CDP-2-C-methyl-D-erythritol 2-phosphate</name>
        <dbReference type="ChEBI" id="CHEBI:57919"/>
    </ligand>
</feature>
<feature type="binding site" evidence="1">
    <location>
        <position position="9"/>
    </location>
    <ligand>
        <name>a divalent metal cation</name>
        <dbReference type="ChEBI" id="CHEBI:60240"/>
    </ligand>
</feature>
<feature type="binding site" evidence="1">
    <location>
        <position position="11"/>
    </location>
    <ligand>
        <name>a divalent metal cation</name>
        <dbReference type="ChEBI" id="CHEBI:60240"/>
    </ligand>
</feature>
<feature type="binding site" evidence="1">
    <location>
        <begin position="35"/>
        <end position="36"/>
    </location>
    <ligand>
        <name>4-CDP-2-C-methyl-D-erythritol 2-phosphate</name>
        <dbReference type="ChEBI" id="CHEBI:57919"/>
    </ligand>
</feature>
<feature type="binding site" evidence="1">
    <location>
        <position position="43"/>
    </location>
    <ligand>
        <name>a divalent metal cation</name>
        <dbReference type="ChEBI" id="CHEBI:60240"/>
    </ligand>
</feature>
<feature type="binding site" evidence="1">
    <location>
        <begin position="57"/>
        <end position="59"/>
    </location>
    <ligand>
        <name>4-CDP-2-C-methyl-D-erythritol 2-phosphate</name>
        <dbReference type="ChEBI" id="CHEBI:57919"/>
    </ligand>
</feature>
<feature type="binding site" evidence="1">
    <location>
        <begin position="62"/>
        <end position="66"/>
    </location>
    <ligand>
        <name>4-CDP-2-C-methyl-D-erythritol 2-phosphate</name>
        <dbReference type="ChEBI" id="CHEBI:57919"/>
    </ligand>
</feature>
<feature type="binding site" evidence="1">
    <location>
        <begin position="101"/>
        <end position="107"/>
    </location>
    <ligand>
        <name>4-CDP-2-C-methyl-D-erythritol 2-phosphate</name>
        <dbReference type="ChEBI" id="CHEBI:57919"/>
    </ligand>
</feature>
<feature type="binding site" evidence="1">
    <location>
        <begin position="133"/>
        <end position="136"/>
    </location>
    <ligand>
        <name>4-CDP-2-C-methyl-D-erythritol 2-phosphate</name>
        <dbReference type="ChEBI" id="CHEBI:57919"/>
    </ligand>
</feature>
<feature type="binding site" evidence="1">
    <location>
        <position position="140"/>
    </location>
    <ligand>
        <name>4-CDP-2-C-methyl-D-erythritol 2-phosphate</name>
        <dbReference type="ChEBI" id="CHEBI:57919"/>
    </ligand>
</feature>
<feature type="binding site" evidence="1">
    <location>
        <position position="143"/>
    </location>
    <ligand>
        <name>4-CDP-2-C-methyl-D-erythritol 2-phosphate</name>
        <dbReference type="ChEBI" id="CHEBI:57919"/>
    </ligand>
</feature>
<feature type="site" description="Transition state stabilizer" evidence="1">
    <location>
        <position position="35"/>
    </location>
</feature>
<feature type="site" description="Transition state stabilizer" evidence="1">
    <location>
        <position position="134"/>
    </location>
</feature>
<gene>
    <name evidence="1" type="primary">ispF</name>
    <name type="ordered locus">BCE33L0082</name>
</gene>
<accession>Q63HB3</accession>
<protein>
    <recommendedName>
        <fullName evidence="1">2-C-methyl-D-erythritol 2,4-cyclodiphosphate synthase</fullName>
        <shortName evidence="1">MECDP-synthase</shortName>
        <shortName evidence="1">MECPP-synthase</shortName>
        <shortName evidence="1">MECPS</shortName>
        <ecNumber evidence="1">4.6.1.12</ecNumber>
    </recommendedName>
</protein>
<organism>
    <name type="scientific">Bacillus cereus (strain ZK / E33L)</name>
    <dbReference type="NCBI Taxonomy" id="288681"/>
    <lineage>
        <taxon>Bacteria</taxon>
        <taxon>Bacillati</taxon>
        <taxon>Bacillota</taxon>
        <taxon>Bacilli</taxon>
        <taxon>Bacillales</taxon>
        <taxon>Bacillaceae</taxon>
        <taxon>Bacillus</taxon>
        <taxon>Bacillus cereus group</taxon>
    </lineage>
</organism>
<name>ISPF_BACCZ</name>
<reference key="1">
    <citation type="journal article" date="2006" name="J. Bacteriol.">
        <title>Pathogenomic sequence analysis of Bacillus cereus and Bacillus thuringiensis isolates closely related to Bacillus anthracis.</title>
        <authorList>
            <person name="Han C.S."/>
            <person name="Xie G."/>
            <person name="Challacombe J.F."/>
            <person name="Altherr M.R."/>
            <person name="Bhotika S.S."/>
            <person name="Bruce D."/>
            <person name="Campbell C.S."/>
            <person name="Campbell M.L."/>
            <person name="Chen J."/>
            <person name="Chertkov O."/>
            <person name="Cleland C."/>
            <person name="Dimitrijevic M."/>
            <person name="Doggett N.A."/>
            <person name="Fawcett J.J."/>
            <person name="Glavina T."/>
            <person name="Goodwin L.A."/>
            <person name="Hill K.K."/>
            <person name="Hitchcock P."/>
            <person name="Jackson P.J."/>
            <person name="Keim P."/>
            <person name="Kewalramani A.R."/>
            <person name="Longmire J."/>
            <person name="Lucas S."/>
            <person name="Malfatti S."/>
            <person name="McMurry K."/>
            <person name="Meincke L.J."/>
            <person name="Misra M."/>
            <person name="Moseman B.L."/>
            <person name="Mundt M."/>
            <person name="Munk A.C."/>
            <person name="Okinaka R.T."/>
            <person name="Parson-Quintana B."/>
            <person name="Reilly L.P."/>
            <person name="Richardson P."/>
            <person name="Robinson D.L."/>
            <person name="Rubin E."/>
            <person name="Saunders E."/>
            <person name="Tapia R."/>
            <person name="Tesmer J.G."/>
            <person name="Thayer N."/>
            <person name="Thompson L.S."/>
            <person name="Tice H."/>
            <person name="Ticknor L.O."/>
            <person name="Wills P.L."/>
            <person name="Brettin T.S."/>
            <person name="Gilna P."/>
        </authorList>
    </citation>
    <scope>NUCLEOTIDE SEQUENCE [LARGE SCALE GENOMIC DNA]</scope>
    <source>
        <strain>ZK / E33L</strain>
    </source>
</reference>
<evidence type="ECO:0000255" key="1">
    <source>
        <dbReference type="HAMAP-Rule" id="MF_00107"/>
    </source>
</evidence>